<organism>
    <name type="scientific">Mus musculus</name>
    <name type="common">Mouse</name>
    <dbReference type="NCBI Taxonomy" id="10090"/>
    <lineage>
        <taxon>Eukaryota</taxon>
        <taxon>Metazoa</taxon>
        <taxon>Chordata</taxon>
        <taxon>Craniata</taxon>
        <taxon>Vertebrata</taxon>
        <taxon>Euteleostomi</taxon>
        <taxon>Mammalia</taxon>
        <taxon>Eutheria</taxon>
        <taxon>Euarchontoglires</taxon>
        <taxon>Glires</taxon>
        <taxon>Rodentia</taxon>
        <taxon>Myomorpha</taxon>
        <taxon>Muroidea</taxon>
        <taxon>Muridae</taxon>
        <taxon>Murinae</taxon>
        <taxon>Mus</taxon>
        <taxon>Mus</taxon>
    </lineage>
</organism>
<accession>Q3TW96</accession>
<accession>A1L3D3</accession>
<accession>Q6KAP8</accession>
<accession>Q6NVB6</accession>
<accession>Q80XP4</accession>
<gene>
    <name type="primary">Uap1l1</name>
</gene>
<protein>
    <recommendedName>
        <fullName>UDP-N-acetylhexosamine pyrophosphorylase-like protein 1</fullName>
        <ecNumber>2.7.7.-</ecNumber>
    </recommendedName>
</protein>
<feature type="chain" id="PRO_0000324581" description="UDP-N-acetylhexosamine pyrophosphorylase-like protein 1">
    <location>
        <begin position="1"/>
        <end position="507"/>
    </location>
</feature>
<feature type="short sequence motif" description="Substrate binding">
    <location>
        <begin position="111"/>
        <end position="114"/>
    </location>
</feature>
<feature type="short sequence motif" description="Substrate binding">
    <location>
        <begin position="306"/>
        <end position="307"/>
    </location>
</feature>
<feature type="binding site" evidence="2">
    <location>
        <begin position="111"/>
        <end position="114"/>
    </location>
    <ligand>
        <name>UTP</name>
        <dbReference type="ChEBI" id="CHEBI:46398"/>
    </ligand>
</feature>
<feature type="binding site" evidence="2">
    <location>
        <position position="125"/>
    </location>
    <ligand>
        <name>UTP</name>
        <dbReference type="ChEBI" id="CHEBI:46398"/>
    </ligand>
</feature>
<feature type="binding site" evidence="2">
    <location>
        <position position="199"/>
    </location>
    <ligand>
        <name>UTP</name>
        <dbReference type="ChEBI" id="CHEBI:46398"/>
    </ligand>
</feature>
<feature type="binding site" evidence="2">
    <location>
        <position position="225"/>
    </location>
    <ligand>
        <name>UTP</name>
        <dbReference type="ChEBI" id="CHEBI:46398"/>
    </ligand>
</feature>
<feature type="binding site" evidence="1">
    <location>
        <position position="226"/>
    </location>
    <ligand>
        <name>substrate</name>
    </ligand>
</feature>
<feature type="binding site" evidence="2">
    <location>
        <position position="256"/>
    </location>
    <ligand>
        <name>UTP</name>
        <dbReference type="ChEBI" id="CHEBI:46398"/>
    </ligand>
</feature>
<feature type="binding site" evidence="2">
    <location>
        <position position="380"/>
    </location>
    <ligand>
        <name>UTP</name>
        <dbReference type="ChEBI" id="CHEBI:46398"/>
    </ligand>
</feature>
<feature type="binding site" evidence="1">
    <location>
        <position position="410"/>
    </location>
    <ligand>
        <name>substrate</name>
    </ligand>
</feature>
<feature type="splice variant" id="VSP_032281" description="In isoform 2." evidence="3">
    <location>
        <begin position="1"/>
        <end position="126"/>
    </location>
</feature>
<name>UAP1L_MOUSE</name>
<evidence type="ECO:0000250" key="1"/>
<evidence type="ECO:0000250" key="2">
    <source>
        <dbReference type="UniProtKB" id="Q9M9P3"/>
    </source>
</evidence>
<evidence type="ECO:0000303" key="3">
    <source>
    </source>
</evidence>
<evidence type="ECO:0000305" key="4"/>
<comment type="alternative products">
    <event type="alternative splicing"/>
    <isoform>
        <id>Q3TW96-1</id>
        <name>1</name>
        <sequence type="displayed"/>
    </isoform>
    <isoform>
        <id>Q3TW96-2</id>
        <name>2</name>
        <sequence type="described" ref="VSP_032281"/>
    </isoform>
</comment>
<comment type="similarity">
    <text evidence="4">Belongs to the UDPGP type 1 family.</text>
</comment>
<comment type="sequence caution" evidence="4">
    <conflict type="erroneous initiation">
        <sequence resource="EMBL-CDS" id="AAH43307"/>
    </conflict>
</comment>
<comment type="sequence caution" evidence="4">
    <conflict type="miscellaneous discrepancy">
        <sequence resource="EMBL-CDS" id="BAD21409"/>
    </conflict>
    <text>The sequence differs from that shown because it seems to be derived from a pre-mRNA.</text>
</comment>
<keyword id="KW-0025">Alternative splicing</keyword>
<keyword id="KW-0548">Nucleotidyltransferase</keyword>
<keyword id="KW-1185">Reference proteome</keyword>
<keyword id="KW-0808">Transferase</keyword>
<sequence>MDSERDVRAQLQRAGQDHLLRFYADLAPEARAALLAELASLEADALREHCQRAAAAGALAPGPLPDLAARLQPLPPERVGSAIRCDQETRLRWEEEGFRQISLNKVAVLLLAGGQGTRLGVTYPKGMYQVGLPSQKTLYQLQAERIRRVQQLADQRQGTHCTVPWYIMTSEFTLGPTIKFFKEHDFFHLDPTNVVLFEQRMLPAVTFEGKAILERKDKVAMAPDGNGGLYCALADHQILEDMKQRGVEFVHVYCVDNILVRLADPVFIGFCVLQGADCGAKVVEKAYPEEPVGVVCQVDGVPQVVEYSEISPEIAGQLGADGGLLYNAGNICNHFFTRGFLDVVTREFEPLLRLHVAMKKVPYVDEEGNLVKPLRPNGIKMEKFVFDVFQFAKNFVAFEVCREEEFSPLKNDDTADRDNPSTCRRALLAQHYRWALQAGARFLDVHGVQLTEQSGMLPNGDPPAICEISPLVSYSGEGLEMYLQGRQLQSPFILDEDQARLLRPQDC</sequence>
<dbReference type="EC" id="2.7.7.-"/>
<dbReference type="EMBL" id="AK151942">
    <property type="protein sequence ID" value="BAE30818.1"/>
    <property type="molecule type" value="mRNA"/>
</dbReference>
<dbReference type="EMBL" id="AK159787">
    <property type="protein sequence ID" value="BAE35370.1"/>
    <property type="molecule type" value="mRNA"/>
</dbReference>
<dbReference type="EMBL" id="AK168977">
    <property type="protein sequence ID" value="BAE40778.1"/>
    <property type="molecule type" value="mRNA"/>
</dbReference>
<dbReference type="EMBL" id="AL732557">
    <property type="status" value="NOT_ANNOTATED_CDS"/>
    <property type="molecule type" value="Genomic_DNA"/>
</dbReference>
<dbReference type="EMBL" id="BC043307">
    <property type="protein sequence ID" value="AAH43307.1"/>
    <property type="status" value="ALT_INIT"/>
    <property type="molecule type" value="mRNA"/>
</dbReference>
<dbReference type="EMBL" id="BC068207">
    <property type="protein sequence ID" value="AAH68207.1"/>
    <property type="molecule type" value="mRNA"/>
</dbReference>
<dbReference type="EMBL" id="BC130030">
    <property type="protein sequence ID" value="AAI30031.1"/>
    <property type="molecule type" value="mRNA"/>
</dbReference>
<dbReference type="EMBL" id="AK131159">
    <property type="protein sequence ID" value="BAD21409.1"/>
    <property type="status" value="ALT_SEQ"/>
    <property type="molecule type" value="Transcribed_RNA"/>
</dbReference>
<dbReference type="CCDS" id="CCDS15767.1">
    <molecule id="Q3TW96-1"/>
</dbReference>
<dbReference type="RefSeq" id="NP_001028465.1">
    <molecule id="Q3TW96-1"/>
    <property type="nucleotide sequence ID" value="NM_001033293.3"/>
</dbReference>
<dbReference type="SMR" id="Q3TW96"/>
<dbReference type="BioGRID" id="230646">
    <property type="interactions" value="4"/>
</dbReference>
<dbReference type="FunCoup" id="Q3TW96">
    <property type="interactions" value="830"/>
</dbReference>
<dbReference type="IntAct" id="Q3TW96">
    <property type="interactions" value="1"/>
</dbReference>
<dbReference type="MINT" id="Q3TW96"/>
<dbReference type="STRING" id="10090.ENSMUSP00000099989"/>
<dbReference type="GlyGen" id="Q3TW96">
    <property type="glycosylation" value="1 site, 1 O-linked glycan (1 site)"/>
</dbReference>
<dbReference type="iPTMnet" id="Q3TW96"/>
<dbReference type="PhosphoSitePlus" id="Q3TW96"/>
<dbReference type="SwissPalm" id="Q3TW96"/>
<dbReference type="jPOST" id="Q3TW96"/>
<dbReference type="PaxDb" id="10090-ENSMUSP00000099989"/>
<dbReference type="PeptideAtlas" id="Q3TW96"/>
<dbReference type="ProteomicsDB" id="298345">
    <molecule id="Q3TW96-1"/>
</dbReference>
<dbReference type="ProteomicsDB" id="298346">
    <molecule id="Q3TW96-2"/>
</dbReference>
<dbReference type="Pumba" id="Q3TW96"/>
<dbReference type="Antibodypedia" id="52196">
    <property type="antibodies" value="83 antibodies from 19 providers"/>
</dbReference>
<dbReference type="Ensembl" id="ENSMUST00000102925.4">
    <molecule id="Q3TW96-1"/>
    <property type="protein sequence ID" value="ENSMUSP00000099989.4"/>
    <property type="gene ID" value="ENSMUSG00000026956.16"/>
</dbReference>
<dbReference type="GeneID" id="227620"/>
<dbReference type="KEGG" id="mmu:227620"/>
<dbReference type="UCSC" id="uc008irr.1">
    <molecule id="Q3TW96-1"/>
    <property type="organism name" value="mouse"/>
</dbReference>
<dbReference type="AGR" id="MGI:2443318"/>
<dbReference type="CTD" id="91373"/>
<dbReference type="MGI" id="MGI:2443318">
    <property type="gene designation" value="Uap1l1"/>
</dbReference>
<dbReference type="VEuPathDB" id="HostDB:ENSMUSG00000026956"/>
<dbReference type="eggNOG" id="KOG2388">
    <property type="taxonomic scope" value="Eukaryota"/>
</dbReference>
<dbReference type="GeneTree" id="ENSGT00940000153464"/>
<dbReference type="HOGENOM" id="CLU_025603_1_0_1"/>
<dbReference type="InParanoid" id="Q3TW96"/>
<dbReference type="OMA" id="THCTVPW"/>
<dbReference type="OrthoDB" id="532420at2759"/>
<dbReference type="PhylomeDB" id="Q3TW96"/>
<dbReference type="TreeFam" id="TF300611"/>
<dbReference type="BioGRID-ORCS" id="227620">
    <property type="hits" value="1 hit in 76 CRISPR screens"/>
</dbReference>
<dbReference type="ChiTaRS" id="Uap1l1">
    <property type="organism name" value="mouse"/>
</dbReference>
<dbReference type="PRO" id="PR:Q3TW96"/>
<dbReference type="Proteomes" id="UP000000589">
    <property type="component" value="Chromosome 2"/>
</dbReference>
<dbReference type="RNAct" id="Q3TW96">
    <property type="molecule type" value="protein"/>
</dbReference>
<dbReference type="Bgee" id="ENSMUSG00000026956">
    <property type="expression patterns" value="Expressed in epithelium of small intestine and 187 other cell types or tissues"/>
</dbReference>
<dbReference type="GO" id="GO:0070569">
    <property type="term" value="F:uridylyltransferase activity"/>
    <property type="evidence" value="ECO:0007669"/>
    <property type="project" value="InterPro"/>
</dbReference>
<dbReference type="CDD" id="cd04193">
    <property type="entry name" value="UDPGlcNAc_PPase"/>
    <property type="match status" value="1"/>
</dbReference>
<dbReference type="FunFam" id="3.90.550.10:FF:000043">
    <property type="entry name" value="UDP-N-acetylhexosamine pyrophosphorylase isoform X2"/>
    <property type="match status" value="1"/>
</dbReference>
<dbReference type="FunFam" id="2.10.10.100:FF:000002">
    <property type="entry name" value="UDP-N-acetylhexosamine pyrophosphorylase-like protein 1"/>
    <property type="match status" value="1"/>
</dbReference>
<dbReference type="Gene3D" id="2.10.10.100">
    <property type="match status" value="1"/>
</dbReference>
<dbReference type="Gene3D" id="3.90.550.10">
    <property type="entry name" value="Spore Coat Polysaccharide Biosynthesis Protein SpsA, Chain A"/>
    <property type="match status" value="1"/>
</dbReference>
<dbReference type="InterPro" id="IPR029044">
    <property type="entry name" value="Nucleotide-diphossugar_trans"/>
</dbReference>
<dbReference type="InterPro" id="IPR039741">
    <property type="entry name" value="UDP-sugar_pyrophosphorylase"/>
</dbReference>
<dbReference type="InterPro" id="IPR002618">
    <property type="entry name" value="UDPGP_fam"/>
</dbReference>
<dbReference type="PANTHER" id="PTHR11952">
    <property type="entry name" value="UDP- GLUCOSE PYROPHOSPHORYLASE"/>
    <property type="match status" value="1"/>
</dbReference>
<dbReference type="PANTHER" id="PTHR11952:SF6">
    <property type="entry name" value="UDP-N-ACETYLHEXOSAMINE PYROPHOSPHORYLASE-LIKE PROTEIN 1"/>
    <property type="match status" value="1"/>
</dbReference>
<dbReference type="Pfam" id="PF01704">
    <property type="entry name" value="UDPGP"/>
    <property type="match status" value="1"/>
</dbReference>
<dbReference type="SUPFAM" id="SSF53448">
    <property type="entry name" value="Nucleotide-diphospho-sugar transferases"/>
    <property type="match status" value="1"/>
</dbReference>
<proteinExistence type="evidence at protein level"/>
<reference key="1">
    <citation type="journal article" date="2005" name="Science">
        <title>The transcriptional landscape of the mammalian genome.</title>
        <authorList>
            <person name="Carninci P."/>
            <person name="Kasukawa T."/>
            <person name="Katayama S."/>
            <person name="Gough J."/>
            <person name="Frith M.C."/>
            <person name="Maeda N."/>
            <person name="Oyama R."/>
            <person name="Ravasi T."/>
            <person name="Lenhard B."/>
            <person name="Wells C."/>
            <person name="Kodzius R."/>
            <person name="Shimokawa K."/>
            <person name="Bajic V.B."/>
            <person name="Brenner S.E."/>
            <person name="Batalov S."/>
            <person name="Forrest A.R."/>
            <person name="Zavolan M."/>
            <person name="Davis M.J."/>
            <person name="Wilming L.G."/>
            <person name="Aidinis V."/>
            <person name="Allen J.E."/>
            <person name="Ambesi-Impiombato A."/>
            <person name="Apweiler R."/>
            <person name="Aturaliya R.N."/>
            <person name="Bailey T.L."/>
            <person name="Bansal M."/>
            <person name="Baxter L."/>
            <person name="Beisel K.W."/>
            <person name="Bersano T."/>
            <person name="Bono H."/>
            <person name="Chalk A.M."/>
            <person name="Chiu K.P."/>
            <person name="Choudhary V."/>
            <person name="Christoffels A."/>
            <person name="Clutterbuck D.R."/>
            <person name="Crowe M.L."/>
            <person name="Dalla E."/>
            <person name="Dalrymple B.P."/>
            <person name="de Bono B."/>
            <person name="Della Gatta G."/>
            <person name="di Bernardo D."/>
            <person name="Down T."/>
            <person name="Engstrom P."/>
            <person name="Fagiolini M."/>
            <person name="Faulkner G."/>
            <person name="Fletcher C.F."/>
            <person name="Fukushima T."/>
            <person name="Furuno M."/>
            <person name="Futaki S."/>
            <person name="Gariboldi M."/>
            <person name="Georgii-Hemming P."/>
            <person name="Gingeras T.R."/>
            <person name="Gojobori T."/>
            <person name="Green R.E."/>
            <person name="Gustincich S."/>
            <person name="Harbers M."/>
            <person name="Hayashi Y."/>
            <person name="Hensch T.K."/>
            <person name="Hirokawa N."/>
            <person name="Hill D."/>
            <person name="Huminiecki L."/>
            <person name="Iacono M."/>
            <person name="Ikeo K."/>
            <person name="Iwama A."/>
            <person name="Ishikawa T."/>
            <person name="Jakt M."/>
            <person name="Kanapin A."/>
            <person name="Katoh M."/>
            <person name="Kawasawa Y."/>
            <person name="Kelso J."/>
            <person name="Kitamura H."/>
            <person name="Kitano H."/>
            <person name="Kollias G."/>
            <person name="Krishnan S.P."/>
            <person name="Kruger A."/>
            <person name="Kummerfeld S.K."/>
            <person name="Kurochkin I.V."/>
            <person name="Lareau L.F."/>
            <person name="Lazarevic D."/>
            <person name="Lipovich L."/>
            <person name="Liu J."/>
            <person name="Liuni S."/>
            <person name="McWilliam S."/>
            <person name="Madan Babu M."/>
            <person name="Madera M."/>
            <person name="Marchionni L."/>
            <person name="Matsuda H."/>
            <person name="Matsuzawa S."/>
            <person name="Miki H."/>
            <person name="Mignone F."/>
            <person name="Miyake S."/>
            <person name="Morris K."/>
            <person name="Mottagui-Tabar S."/>
            <person name="Mulder N."/>
            <person name="Nakano N."/>
            <person name="Nakauchi H."/>
            <person name="Ng P."/>
            <person name="Nilsson R."/>
            <person name="Nishiguchi S."/>
            <person name="Nishikawa S."/>
            <person name="Nori F."/>
            <person name="Ohara O."/>
            <person name="Okazaki Y."/>
            <person name="Orlando V."/>
            <person name="Pang K.C."/>
            <person name="Pavan W.J."/>
            <person name="Pavesi G."/>
            <person name="Pesole G."/>
            <person name="Petrovsky N."/>
            <person name="Piazza S."/>
            <person name="Reed J."/>
            <person name="Reid J.F."/>
            <person name="Ring B.Z."/>
            <person name="Ringwald M."/>
            <person name="Rost B."/>
            <person name="Ruan Y."/>
            <person name="Salzberg S.L."/>
            <person name="Sandelin A."/>
            <person name="Schneider C."/>
            <person name="Schoenbach C."/>
            <person name="Sekiguchi K."/>
            <person name="Semple C.A."/>
            <person name="Seno S."/>
            <person name="Sessa L."/>
            <person name="Sheng Y."/>
            <person name="Shibata Y."/>
            <person name="Shimada H."/>
            <person name="Shimada K."/>
            <person name="Silva D."/>
            <person name="Sinclair B."/>
            <person name="Sperling S."/>
            <person name="Stupka E."/>
            <person name="Sugiura K."/>
            <person name="Sultana R."/>
            <person name="Takenaka Y."/>
            <person name="Taki K."/>
            <person name="Tammoja K."/>
            <person name="Tan S.L."/>
            <person name="Tang S."/>
            <person name="Taylor M.S."/>
            <person name="Tegner J."/>
            <person name="Teichmann S.A."/>
            <person name="Ueda H.R."/>
            <person name="van Nimwegen E."/>
            <person name="Verardo R."/>
            <person name="Wei C.L."/>
            <person name="Yagi K."/>
            <person name="Yamanishi H."/>
            <person name="Zabarovsky E."/>
            <person name="Zhu S."/>
            <person name="Zimmer A."/>
            <person name="Hide W."/>
            <person name="Bult C."/>
            <person name="Grimmond S.M."/>
            <person name="Teasdale R.D."/>
            <person name="Liu E.T."/>
            <person name="Brusic V."/>
            <person name="Quackenbush J."/>
            <person name="Wahlestedt C."/>
            <person name="Mattick J.S."/>
            <person name="Hume D.A."/>
            <person name="Kai C."/>
            <person name="Sasaki D."/>
            <person name="Tomaru Y."/>
            <person name="Fukuda S."/>
            <person name="Kanamori-Katayama M."/>
            <person name="Suzuki M."/>
            <person name="Aoki J."/>
            <person name="Arakawa T."/>
            <person name="Iida J."/>
            <person name="Imamura K."/>
            <person name="Itoh M."/>
            <person name="Kato T."/>
            <person name="Kawaji H."/>
            <person name="Kawagashira N."/>
            <person name="Kawashima T."/>
            <person name="Kojima M."/>
            <person name="Kondo S."/>
            <person name="Konno H."/>
            <person name="Nakano K."/>
            <person name="Ninomiya N."/>
            <person name="Nishio T."/>
            <person name="Okada M."/>
            <person name="Plessy C."/>
            <person name="Shibata K."/>
            <person name="Shiraki T."/>
            <person name="Suzuki S."/>
            <person name="Tagami M."/>
            <person name="Waki K."/>
            <person name="Watahiki A."/>
            <person name="Okamura-Oho Y."/>
            <person name="Suzuki H."/>
            <person name="Kawai J."/>
            <person name="Hayashizaki Y."/>
        </authorList>
    </citation>
    <scope>NUCLEOTIDE SEQUENCE [LARGE SCALE MRNA] (ISOFORM 1)</scope>
    <source>
        <strain>C57BL/6J</strain>
        <tissue>Amnion</tissue>
        <tissue>Bone marrow</tissue>
    </source>
</reference>
<reference key="2">
    <citation type="journal article" date="2009" name="PLoS Biol.">
        <title>Lineage-specific biology revealed by a finished genome assembly of the mouse.</title>
        <authorList>
            <person name="Church D.M."/>
            <person name="Goodstadt L."/>
            <person name="Hillier L.W."/>
            <person name="Zody M.C."/>
            <person name="Goldstein S."/>
            <person name="She X."/>
            <person name="Bult C.J."/>
            <person name="Agarwala R."/>
            <person name="Cherry J.L."/>
            <person name="DiCuccio M."/>
            <person name="Hlavina W."/>
            <person name="Kapustin Y."/>
            <person name="Meric P."/>
            <person name="Maglott D."/>
            <person name="Birtle Z."/>
            <person name="Marques A.C."/>
            <person name="Graves T."/>
            <person name="Zhou S."/>
            <person name="Teague B."/>
            <person name="Potamousis K."/>
            <person name="Churas C."/>
            <person name="Place M."/>
            <person name="Herschleb J."/>
            <person name="Runnheim R."/>
            <person name="Forrest D."/>
            <person name="Amos-Landgraf J."/>
            <person name="Schwartz D.C."/>
            <person name="Cheng Z."/>
            <person name="Lindblad-Toh K."/>
            <person name="Eichler E.E."/>
            <person name="Ponting C.P."/>
        </authorList>
    </citation>
    <scope>NUCLEOTIDE SEQUENCE [LARGE SCALE GENOMIC DNA]</scope>
    <source>
        <strain>C57BL/6J</strain>
    </source>
</reference>
<reference key="3">
    <citation type="journal article" date="2004" name="Genome Res.">
        <title>The status, quality, and expansion of the NIH full-length cDNA project: the Mammalian Gene Collection (MGC).</title>
        <authorList>
            <consortium name="The MGC Project Team"/>
        </authorList>
    </citation>
    <scope>NUCLEOTIDE SEQUENCE [LARGE SCALE MRNA] (ISOFORM 2)</scope>
    <scope>NUCLEOTIDE SEQUENCE [LARGE SCALE MRNA] OF 3-507 (ISOFORM 1)</scope>
    <source>
        <strain>Czech II</strain>
        <strain>FVB/N</strain>
        <tissue>Kidney</tissue>
        <tissue>Lung</tissue>
    </source>
</reference>
<reference key="4">
    <citation type="journal article" date="2004" name="DNA Res.">
        <title>Prediction of the coding sequences of mouse homologues of FLJ genes: the complete nucleotide sequences of 110 mouse FLJ-homologous cDNAs identified by screening of terminal sequences of cDNA clones randomly sampled from size-fractionated libraries.</title>
        <authorList>
            <person name="Okazaki N."/>
            <person name="Kikuno R."/>
            <person name="Ohara R."/>
            <person name="Inamoto S."/>
            <person name="Koseki H."/>
            <person name="Hiraoka S."/>
            <person name="Saga Y."/>
            <person name="Kitamura H."/>
            <person name="Nakagawa T."/>
            <person name="Nagase T."/>
            <person name="Ohara O."/>
            <person name="Koga H."/>
        </authorList>
    </citation>
    <scope>NUCLEOTIDE SEQUENCE [LARGE SCALE MRNA] OF 8-477 (ISOFORM 1)</scope>
    <source>
        <tissue>Spleen</tissue>
    </source>
</reference>
<reference key="5">
    <citation type="journal article" date="2010" name="Cell">
        <title>A tissue-specific atlas of mouse protein phosphorylation and expression.</title>
        <authorList>
            <person name="Huttlin E.L."/>
            <person name="Jedrychowski M.P."/>
            <person name="Elias J.E."/>
            <person name="Goswami T."/>
            <person name="Rad R."/>
            <person name="Beausoleil S.A."/>
            <person name="Villen J."/>
            <person name="Haas W."/>
            <person name="Sowa M.E."/>
            <person name="Gygi S.P."/>
        </authorList>
    </citation>
    <scope>IDENTIFICATION BY MASS SPECTROMETRY [LARGE SCALE ANALYSIS]</scope>
    <source>
        <tissue>Brain</tissue>
        <tissue>Heart</tissue>
        <tissue>Kidney</tissue>
        <tissue>Liver</tissue>
        <tissue>Lung</tissue>
        <tissue>Pancreas</tissue>
        <tissue>Spleen</tissue>
        <tissue>Testis</tissue>
    </source>
</reference>